<feature type="chain" id="PRO_0000090332" description="Triosephosphate isomerase">
    <location>
        <begin position="1"/>
        <end position="222"/>
    </location>
</feature>
<feature type="active site" description="Electrophile" evidence="1">
    <location>
        <position position="93"/>
    </location>
</feature>
<feature type="active site" description="Proton acceptor" evidence="1">
    <location>
        <position position="141"/>
    </location>
</feature>
<feature type="binding site" evidence="1">
    <location>
        <begin position="9"/>
        <end position="11"/>
    </location>
    <ligand>
        <name>substrate</name>
    </ligand>
</feature>
<feature type="binding site" evidence="1">
    <location>
        <position position="146"/>
    </location>
    <ligand>
        <name>substrate</name>
    </ligand>
</feature>
<feature type="binding site" evidence="1">
    <location>
        <position position="181"/>
    </location>
    <ligand>
        <name>substrate</name>
    </ligand>
</feature>
<feature type="binding site" evidence="1">
    <location>
        <begin position="202"/>
        <end position="203"/>
    </location>
    <ligand>
        <name>substrate</name>
    </ligand>
</feature>
<dbReference type="EC" id="5.3.1.1" evidence="1"/>
<dbReference type="EMBL" id="AE010299">
    <property type="protein sequence ID" value="AAM07946.1"/>
    <property type="molecule type" value="Genomic_DNA"/>
</dbReference>
<dbReference type="RefSeq" id="WP_011024480.1">
    <property type="nucleotide sequence ID" value="NC_003552.1"/>
</dbReference>
<dbReference type="SMR" id="Q8THB0"/>
<dbReference type="FunCoup" id="Q8THB0">
    <property type="interactions" value="254"/>
</dbReference>
<dbReference type="STRING" id="188937.MA_4607"/>
<dbReference type="EnsemblBacteria" id="AAM07946">
    <property type="protein sequence ID" value="AAM07946"/>
    <property type="gene ID" value="MA_4607"/>
</dbReference>
<dbReference type="GeneID" id="1476501"/>
<dbReference type="KEGG" id="mac:MA_4607"/>
<dbReference type="HOGENOM" id="CLU_104921_0_0_2"/>
<dbReference type="InParanoid" id="Q8THB0"/>
<dbReference type="OrthoDB" id="9465at2157"/>
<dbReference type="PhylomeDB" id="Q8THB0"/>
<dbReference type="UniPathway" id="UPA00109">
    <property type="reaction ID" value="UER00189"/>
</dbReference>
<dbReference type="UniPathway" id="UPA00138"/>
<dbReference type="Proteomes" id="UP000002487">
    <property type="component" value="Chromosome"/>
</dbReference>
<dbReference type="GO" id="GO:0005829">
    <property type="term" value="C:cytosol"/>
    <property type="evidence" value="ECO:0000318"/>
    <property type="project" value="GO_Central"/>
</dbReference>
<dbReference type="GO" id="GO:0004807">
    <property type="term" value="F:triose-phosphate isomerase activity"/>
    <property type="evidence" value="ECO:0000318"/>
    <property type="project" value="GO_Central"/>
</dbReference>
<dbReference type="GO" id="GO:0006094">
    <property type="term" value="P:gluconeogenesis"/>
    <property type="evidence" value="ECO:0000318"/>
    <property type="project" value="GO_Central"/>
</dbReference>
<dbReference type="GO" id="GO:0046166">
    <property type="term" value="P:glyceraldehyde-3-phosphate biosynthetic process"/>
    <property type="evidence" value="ECO:0000318"/>
    <property type="project" value="GO_Central"/>
</dbReference>
<dbReference type="GO" id="GO:0019563">
    <property type="term" value="P:glycerol catabolic process"/>
    <property type="evidence" value="ECO:0000318"/>
    <property type="project" value="GO_Central"/>
</dbReference>
<dbReference type="GO" id="GO:0006096">
    <property type="term" value="P:glycolytic process"/>
    <property type="evidence" value="ECO:0000318"/>
    <property type="project" value="GO_Central"/>
</dbReference>
<dbReference type="CDD" id="cd00311">
    <property type="entry name" value="TIM"/>
    <property type="match status" value="1"/>
</dbReference>
<dbReference type="FunFam" id="3.20.20.70:FF:000223">
    <property type="entry name" value="Triosephosphate isomerase"/>
    <property type="match status" value="1"/>
</dbReference>
<dbReference type="Gene3D" id="3.20.20.70">
    <property type="entry name" value="Aldolase class I"/>
    <property type="match status" value="1"/>
</dbReference>
<dbReference type="HAMAP" id="MF_00147_A">
    <property type="entry name" value="TIM_A"/>
    <property type="match status" value="1"/>
</dbReference>
<dbReference type="InterPro" id="IPR013785">
    <property type="entry name" value="Aldolase_TIM"/>
</dbReference>
<dbReference type="InterPro" id="IPR035990">
    <property type="entry name" value="TIM_sf"/>
</dbReference>
<dbReference type="InterPro" id="IPR000652">
    <property type="entry name" value="Triosephosphate_isomerase"/>
</dbReference>
<dbReference type="InterPro" id="IPR022891">
    <property type="entry name" value="Triosephosphate_isomerase_arc"/>
</dbReference>
<dbReference type="NCBIfam" id="NF003302">
    <property type="entry name" value="PRK04302.1"/>
    <property type="match status" value="1"/>
</dbReference>
<dbReference type="NCBIfam" id="TIGR00419">
    <property type="entry name" value="tim"/>
    <property type="match status" value="1"/>
</dbReference>
<dbReference type="Pfam" id="PF00121">
    <property type="entry name" value="TIM"/>
    <property type="match status" value="1"/>
</dbReference>
<dbReference type="SUPFAM" id="SSF51351">
    <property type="entry name" value="Triosephosphate isomerase (TIM)"/>
    <property type="match status" value="1"/>
</dbReference>
<dbReference type="PROSITE" id="PS51440">
    <property type="entry name" value="TIM_2"/>
    <property type="match status" value="1"/>
</dbReference>
<comment type="function">
    <text evidence="1">Involved in the gluconeogenesis. Catalyzes stereospecifically the conversion of dihydroxyacetone phosphate (DHAP) to D-glyceraldehyde-3-phosphate (G3P).</text>
</comment>
<comment type="catalytic activity">
    <reaction evidence="1">
        <text>D-glyceraldehyde 3-phosphate = dihydroxyacetone phosphate</text>
        <dbReference type="Rhea" id="RHEA:18585"/>
        <dbReference type="ChEBI" id="CHEBI:57642"/>
        <dbReference type="ChEBI" id="CHEBI:59776"/>
        <dbReference type="EC" id="5.3.1.1"/>
    </reaction>
</comment>
<comment type="pathway">
    <text evidence="1">Carbohydrate biosynthesis; gluconeogenesis.</text>
</comment>
<comment type="pathway">
    <text evidence="1">Carbohydrate degradation; glycolysis; D-glyceraldehyde 3-phosphate from glycerone phosphate: step 1/1.</text>
</comment>
<comment type="subunit">
    <text evidence="1">Homotetramer; dimer of dimers.</text>
</comment>
<comment type="subcellular location">
    <subcellularLocation>
        <location evidence="1">Cytoplasm</location>
    </subcellularLocation>
</comment>
<comment type="similarity">
    <text evidence="1">Belongs to the triosephosphate isomerase family.</text>
</comment>
<name>TPIS_METAC</name>
<keyword id="KW-0963">Cytoplasm</keyword>
<keyword id="KW-0312">Gluconeogenesis</keyword>
<keyword id="KW-0324">Glycolysis</keyword>
<keyword id="KW-0413">Isomerase</keyword>
<keyword id="KW-1185">Reference proteome</keyword>
<gene>
    <name evidence="1" type="primary">tpiA</name>
    <name type="synonym">tpi</name>
    <name type="ordered locus">MA_4607</name>
</gene>
<protein>
    <recommendedName>
        <fullName evidence="1">Triosephosphate isomerase</fullName>
        <shortName evidence="1">TIM</shortName>
        <shortName evidence="1">TPI</shortName>
        <ecNumber evidence="1">5.3.1.1</ecNumber>
    </recommendedName>
    <alternativeName>
        <fullName evidence="1">Triose-phosphate isomerase</fullName>
    </alternativeName>
</protein>
<sequence length="222" mass="22848">MGSPFILLNYKTYNQGTGQGAVEIARACRAVSEESGIEIAVAPQLPDIYRVASEVELPIFSQHMDGVGAGSFTGHVFGKCIKEAGAVGTLINHSERRLTLAEIEASLKAAKEFGLRAVICTNNVPTTAAAAALEPDYVAIEPPELIGSGIPVSKADPEVVSGSVEAVAKINSGVKVLCGAGISKGEDLRAALDLGSQGVLLASGIVKAADPKAALEDLIRLV</sequence>
<reference key="1">
    <citation type="journal article" date="2002" name="Genome Res.">
        <title>The genome of Methanosarcina acetivorans reveals extensive metabolic and physiological diversity.</title>
        <authorList>
            <person name="Galagan J.E."/>
            <person name="Nusbaum C."/>
            <person name="Roy A."/>
            <person name="Endrizzi M.G."/>
            <person name="Macdonald P."/>
            <person name="FitzHugh W."/>
            <person name="Calvo S."/>
            <person name="Engels R."/>
            <person name="Smirnov S."/>
            <person name="Atnoor D."/>
            <person name="Brown A."/>
            <person name="Allen N."/>
            <person name="Naylor J."/>
            <person name="Stange-Thomann N."/>
            <person name="DeArellano K."/>
            <person name="Johnson R."/>
            <person name="Linton L."/>
            <person name="McEwan P."/>
            <person name="McKernan K."/>
            <person name="Talamas J."/>
            <person name="Tirrell A."/>
            <person name="Ye W."/>
            <person name="Zimmer A."/>
            <person name="Barber R.D."/>
            <person name="Cann I."/>
            <person name="Graham D.E."/>
            <person name="Grahame D.A."/>
            <person name="Guss A.M."/>
            <person name="Hedderich R."/>
            <person name="Ingram-Smith C."/>
            <person name="Kuettner H.C."/>
            <person name="Krzycki J.A."/>
            <person name="Leigh J.A."/>
            <person name="Li W."/>
            <person name="Liu J."/>
            <person name="Mukhopadhyay B."/>
            <person name="Reeve J.N."/>
            <person name="Smith K."/>
            <person name="Springer T.A."/>
            <person name="Umayam L.A."/>
            <person name="White O."/>
            <person name="White R.H."/>
            <person name="de Macario E.C."/>
            <person name="Ferry J.G."/>
            <person name="Jarrell K.F."/>
            <person name="Jing H."/>
            <person name="Macario A.J.L."/>
            <person name="Paulsen I.T."/>
            <person name="Pritchett M."/>
            <person name="Sowers K.R."/>
            <person name="Swanson R.V."/>
            <person name="Zinder S.H."/>
            <person name="Lander E."/>
            <person name="Metcalf W.W."/>
            <person name="Birren B."/>
        </authorList>
    </citation>
    <scope>NUCLEOTIDE SEQUENCE [LARGE SCALE GENOMIC DNA]</scope>
    <source>
        <strain>ATCC 35395 / DSM 2834 / JCM 12185 / C2A</strain>
    </source>
</reference>
<evidence type="ECO:0000255" key="1">
    <source>
        <dbReference type="HAMAP-Rule" id="MF_00147"/>
    </source>
</evidence>
<proteinExistence type="inferred from homology"/>
<organism>
    <name type="scientific">Methanosarcina acetivorans (strain ATCC 35395 / DSM 2834 / JCM 12185 / C2A)</name>
    <dbReference type="NCBI Taxonomy" id="188937"/>
    <lineage>
        <taxon>Archaea</taxon>
        <taxon>Methanobacteriati</taxon>
        <taxon>Methanobacteriota</taxon>
        <taxon>Stenosarchaea group</taxon>
        <taxon>Methanomicrobia</taxon>
        <taxon>Methanosarcinales</taxon>
        <taxon>Methanosarcinaceae</taxon>
        <taxon>Methanosarcina</taxon>
    </lineage>
</organism>
<accession>Q8THB0</accession>